<proteinExistence type="inferred from homology"/>
<comment type="function">
    <text evidence="1">The RecF protein is involved in DNA metabolism; it is required for DNA replication and normal SOS inducibility. RecF binds preferentially to single-stranded, linear DNA. It also seems to bind ATP.</text>
</comment>
<comment type="subcellular location">
    <subcellularLocation>
        <location evidence="1">Cytoplasm</location>
    </subcellularLocation>
</comment>
<comment type="similarity">
    <text evidence="1">Belongs to the RecF family.</text>
</comment>
<keyword id="KW-0067">ATP-binding</keyword>
<keyword id="KW-0963">Cytoplasm</keyword>
<keyword id="KW-0227">DNA damage</keyword>
<keyword id="KW-0234">DNA repair</keyword>
<keyword id="KW-0235">DNA replication</keyword>
<keyword id="KW-0238">DNA-binding</keyword>
<keyword id="KW-0547">Nucleotide-binding</keyword>
<keyword id="KW-0742">SOS response</keyword>
<gene>
    <name evidence="1" type="primary">recF</name>
    <name type="ordered locus">BWG_3390</name>
</gene>
<accession>C4ZYX7</accession>
<reference key="1">
    <citation type="journal article" date="2009" name="J. Bacteriol.">
        <title>Genomic sequencing reveals regulatory mutations and recombinational events in the widely used MC4100 lineage of Escherichia coli K-12.</title>
        <authorList>
            <person name="Ferenci T."/>
            <person name="Zhou Z."/>
            <person name="Betteridge T."/>
            <person name="Ren Y."/>
            <person name="Liu Y."/>
            <person name="Feng L."/>
            <person name="Reeves P.R."/>
            <person name="Wang L."/>
        </authorList>
    </citation>
    <scope>NUCLEOTIDE SEQUENCE [LARGE SCALE GENOMIC DNA]</scope>
    <source>
        <strain>K12 / MC4100 / BW2952</strain>
    </source>
</reference>
<name>RECF_ECOBW</name>
<feature type="chain" id="PRO_1000205480" description="DNA replication and repair protein RecF">
    <location>
        <begin position="1"/>
        <end position="357"/>
    </location>
</feature>
<feature type="binding site" evidence="1">
    <location>
        <begin position="30"/>
        <end position="37"/>
    </location>
    <ligand>
        <name>ATP</name>
        <dbReference type="ChEBI" id="CHEBI:30616"/>
    </ligand>
</feature>
<dbReference type="EMBL" id="CP001396">
    <property type="protein sequence ID" value="ACR63283.1"/>
    <property type="molecule type" value="Genomic_DNA"/>
</dbReference>
<dbReference type="RefSeq" id="WP_000060112.1">
    <property type="nucleotide sequence ID" value="NC_012759.1"/>
</dbReference>
<dbReference type="SMR" id="C4ZYX7"/>
<dbReference type="GeneID" id="93778441"/>
<dbReference type="KEGG" id="ebw:BWG_3390"/>
<dbReference type="HOGENOM" id="CLU_040267_0_0_6"/>
<dbReference type="GO" id="GO:0005737">
    <property type="term" value="C:cytoplasm"/>
    <property type="evidence" value="ECO:0007669"/>
    <property type="project" value="UniProtKB-SubCell"/>
</dbReference>
<dbReference type="GO" id="GO:0005524">
    <property type="term" value="F:ATP binding"/>
    <property type="evidence" value="ECO:0007669"/>
    <property type="project" value="UniProtKB-UniRule"/>
</dbReference>
<dbReference type="GO" id="GO:0003697">
    <property type="term" value="F:single-stranded DNA binding"/>
    <property type="evidence" value="ECO:0007669"/>
    <property type="project" value="UniProtKB-UniRule"/>
</dbReference>
<dbReference type="GO" id="GO:0006260">
    <property type="term" value="P:DNA replication"/>
    <property type="evidence" value="ECO:0007669"/>
    <property type="project" value="UniProtKB-UniRule"/>
</dbReference>
<dbReference type="GO" id="GO:0000731">
    <property type="term" value="P:DNA synthesis involved in DNA repair"/>
    <property type="evidence" value="ECO:0007669"/>
    <property type="project" value="TreeGrafter"/>
</dbReference>
<dbReference type="GO" id="GO:0006302">
    <property type="term" value="P:double-strand break repair"/>
    <property type="evidence" value="ECO:0007669"/>
    <property type="project" value="TreeGrafter"/>
</dbReference>
<dbReference type="GO" id="GO:0009432">
    <property type="term" value="P:SOS response"/>
    <property type="evidence" value="ECO:0007669"/>
    <property type="project" value="UniProtKB-UniRule"/>
</dbReference>
<dbReference type="FunFam" id="1.20.1050.90:FF:000001">
    <property type="entry name" value="DNA replication and repair protein RecF"/>
    <property type="match status" value="1"/>
</dbReference>
<dbReference type="Gene3D" id="3.40.50.300">
    <property type="entry name" value="P-loop containing nucleotide triphosphate hydrolases"/>
    <property type="match status" value="1"/>
</dbReference>
<dbReference type="Gene3D" id="1.20.1050.90">
    <property type="entry name" value="RecF/RecN/SMC, N-terminal domain"/>
    <property type="match status" value="1"/>
</dbReference>
<dbReference type="HAMAP" id="MF_00365">
    <property type="entry name" value="RecF"/>
    <property type="match status" value="1"/>
</dbReference>
<dbReference type="InterPro" id="IPR001238">
    <property type="entry name" value="DNA-binding_RecF"/>
</dbReference>
<dbReference type="InterPro" id="IPR018078">
    <property type="entry name" value="DNA-binding_RecF_CS"/>
</dbReference>
<dbReference type="InterPro" id="IPR027417">
    <property type="entry name" value="P-loop_NTPase"/>
</dbReference>
<dbReference type="InterPro" id="IPR003395">
    <property type="entry name" value="RecF/RecN/SMC_N"/>
</dbReference>
<dbReference type="InterPro" id="IPR042174">
    <property type="entry name" value="RecF_2"/>
</dbReference>
<dbReference type="NCBIfam" id="TIGR00611">
    <property type="entry name" value="recf"/>
    <property type="match status" value="1"/>
</dbReference>
<dbReference type="PANTHER" id="PTHR32182">
    <property type="entry name" value="DNA REPLICATION AND REPAIR PROTEIN RECF"/>
    <property type="match status" value="1"/>
</dbReference>
<dbReference type="PANTHER" id="PTHR32182:SF0">
    <property type="entry name" value="DNA REPLICATION AND REPAIR PROTEIN RECF"/>
    <property type="match status" value="1"/>
</dbReference>
<dbReference type="Pfam" id="PF02463">
    <property type="entry name" value="SMC_N"/>
    <property type="match status" value="1"/>
</dbReference>
<dbReference type="SUPFAM" id="SSF52540">
    <property type="entry name" value="P-loop containing nucleoside triphosphate hydrolases"/>
    <property type="match status" value="1"/>
</dbReference>
<dbReference type="PROSITE" id="PS00617">
    <property type="entry name" value="RECF_1"/>
    <property type="match status" value="1"/>
</dbReference>
<dbReference type="PROSITE" id="PS00618">
    <property type="entry name" value="RECF_2"/>
    <property type="match status" value="1"/>
</dbReference>
<organism>
    <name type="scientific">Escherichia coli (strain K12 / MC4100 / BW2952)</name>
    <dbReference type="NCBI Taxonomy" id="595496"/>
    <lineage>
        <taxon>Bacteria</taxon>
        <taxon>Pseudomonadati</taxon>
        <taxon>Pseudomonadota</taxon>
        <taxon>Gammaproteobacteria</taxon>
        <taxon>Enterobacterales</taxon>
        <taxon>Enterobacteriaceae</taxon>
        <taxon>Escherichia</taxon>
    </lineage>
</organism>
<protein>
    <recommendedName>
        <fullName evidence="1">DNA replication and repair protein RecF</fullName>
    </recommendedName>
</protein>
<evidence type="ECO:0000255" key="1">
    <source>
        <dbReference type="HAMAP-Rule" id="MF_00365"/>
    </source>
</evidence>
<sequence>MSLTRLLIRDFRNIETADLALSPGFNFLVGANGSGKTSVLEAIYTLGHGRAFRSLQIGRVIRHEQEAFVLHGRLQGEERETAIGLTKDKQGDSKVRIDGTDGHKVAELAHLMPMQLITPEGFTLLNGGPKYRRAFLDWGCFHNEPGFFTAWSNLKRLLKQRNAALRQVTRYEQLRPWDKELIPLAEQISTWRAEYSAGIAADMADTCKQFLPEFSLTFSFQRGWEKETEYAEVLERNFERDRQLTYTAHGPHKADLRIRADGAPVEDTLSRGQLKLLMCALRLAQGEFLTRESGRRCLYLIDDFASELDDERRGLLASRLKATQSQVFVSAISAEHVIDMSDENSKMFTVEKGKITD</sequence>